<proteinExistence type="inferred from homology"/>
<feature type="chain" id="PRO_0000121344" description="DNA-directed RNA polymerase subunit Rpo10">
    <location>
        <begin position="1"/>
        <end position="77"/>
    </location>
</feature>
<feature type="binding site" evidence="1">
    <location>
        <position position="7"/>
    </location>
    <ligand>
        <name>Zn(2+)</name>
        <dbReference type="ChEBI" id="CHEBI:29105"/>
    </ligand>
</feature>
<feature type="binding site" evidence="1">
    <location>
        <position position="10"/>
    </location>
    <ligand>
        <name>Zn(2+)</name>
        <dbReference type="ChEBI" id="CHEBI:29105"/>
    </ligand>
</feature>
<feature type="binding site" evidence="1">
    <location>
        <position position="44"/>
    </location>
    <ligand>
        <name>Zn(2+)</name>
        <dbReference type="ChEBI" id="CHEBI:29105"/>
    </ligand>
</feature>
<feature type="binding site" evidence="1">
    <location>
        <position position="45"/>
    </location>
    <ligand>
        <name>Zn(2+)</name>
        <dbReference type="ChEBI" id="CHEBI:29105"/>
    </ligand>
</feature>
<evidence type="ECO:0000255" key="1">
    <source>
        <dbReference type="HAMAP-Rule" id="MF_00250"/>
    </source>
</evidence>
<sequence>MLPPVRCFTCGRPLGHLWPRFRELVASGKTPGEALDELGVDRYCCRRTLFTSVTYIEHAAKYRVGIHVPPERLKMWG</sequence>
<keyword id="KW-0963">Cytoplasm</keyword>
<keyword id="KW-0240">DNA-directed RNA polymerase</keyword>
<keyword id="KW-0479">Metal-binding</keyword>
<keyword id="KW-0548">Nucleotidyltransferase</keyword>
<keyword id="KW-1185">Reference proteome</keyword>
<keyword id="KW-0804">Transcription</keyword>
<keyword id="KW-0808">Transferase</keyword>
<keyword id="KW-0862">Zinc</keyword>
<comment type="function">
    <text evidence="1">DNA-dependent RNA polymerase (RNAP) catalyzes the transcription of DNA into RNA using the four ribonucleoside triphosphates as substrates.</text>
</comment>
<comment type="catalytic activity">
    <reaction evidence="1">
        <text>RNA(n) + a ribonucleoside 5'-triphosphate = RNA(n+1) + diphosphate</text>
        <dbReference type="Rhea" id="RHEA:21248"/>
        <dbReference type="Rhea" id="RHEA-COMP:14527"/>
        <dbReference type="Rhea" id="RHEA-COMP:17342"/>
        <dbReference type="ChEBI" id="CHEBI:33019"/>
        <dbReference type="ChEBI" id="CHEBI:61557"/>
        <dbReference type="ChEBI" id="CHEBI:140395"/>
        <dbReference type="EC" id="2.7.7.6"/>
    </reaction>
</comment>
<comment type="cofactor">
    <cofactor evidence="1">
        <name>Zn(2+)</name>
        <dbReference type="ChEBI" id="CHEBI:29105"/>
    </cofactor>
    <text evidence="1">Binds 1 zinc ion.</text>
</comment>
<comment type="subunit">
    <text evidence="1">Part of the RNA polymerase complex.</text>
</comment>
<comment type="subcellular location">
    <subcellularLocation>
        <location evidence="1">Cytoplasm</location>
    </subcellularLocation>
</comment>
<comment type="similarity">
    <text evidence="1">Belongs to the archaeal Rpo10/eukaryotic RPB10 RNA polymerase subunit family.</text>
</comment>
<protein>
    <recommendedName>
        <fullName evidence="1">DNA-directed RNA polymerase subunit Rpo10</fullName>
        <ecNumber evidence="1">2.7.7.6</ecNumber>
    </recommendedName>
    <alternativeName>
        <fullName evidence="1">DNA-directed RNA polymerase subunit N</fullName>
    </alternativeName>
</protein>
<reference key="1">
    <citation type="journal article" date="1999" name="DNA Res.">
        <title>Complete genome sequence of an aerobic hyper-thermophilic crenarchaeon, Aeropyrum pernix K1.</title>
        <authorList>
            <person name="Kawarabayasi Y."/>
            <person name="Hino Y."/>
            <person name="Horikawa H."/>
            <person name="Yamazaki S."/>
            <person name="Haikawa Y."/>
            <person name="Jin-no K."/>
            <person name="Takahashi M."/>
            <person name="Sekine M."/>
            <person name="Baba S."/>
            <person name="Ankai A."/>
            <person name="Kosugi H."/>
            <person name="Hosoyama A."/>
            <person name="Fukui S."/>
            <person name="Nagai Y."/>
            <person name="Nishijima K."/>
            <person name="Nakazawa H."/>
            <person name="Takamiya M."/>
            <person name="Masuda S."/>
            <person name="Funahashi T."/>
            <person name="Tanaka T."/>
            <person name="Kudoh Y."/>
            <person name="Yamazaki J."/>
            <person name="Kushida N."/>
            <person name="Oguchi A."/>
            <person name="Aoki K."/>
            <person name="Kubota K."/>
            <person name="Nakamura Y."/>
            <person name="Nomura N."/>
            <person name="Sako Y."/>
            <person name="Kikuchi H."/>
        </authorList>
    </citation>
    <scope>NUCLEOTIDE SEQUENCE [LARGE SCALE GENOMIC DNA]</scope>
    <source>
        <strain>ATCC 700893 / DSM 11879 / JCM 9820 / NBRC 100138 / K1</strain>
    </source>
</reference>
<accession>Q9YB47</accession>
<gene>
    <name evidence="1" type="primary">rpo10</name>
    <name evidence="1" type="synonym">rpoN</name>
    <name type="ordered locus">APE_1749a</name>
    <name type="ORF">APES058</name>
</gene>
<organism>
    <name type="scientific">Aeropyrum pernix (strain ATCC 700893 / DSM 11879 / JCM 9820 / NBRC 100138 / K1)</name>
    <dbReference type="NCBI Taxonomy" id="272557"/>
    <lineage>
        <taxon>Archaea</taxon>
        <taxon>Thermoproteota</taxon>
        <taxon>Thermoprotei</taxon>
        <taxon>Desulfurococcales</taxon>
        <taxon>Desulfurococcaceae</taxon>
        <taxon>Aeropyrum</taxon>
    </lineage>
</organism>
<dbReference type="EC" id="2.7.7.6" evidence="1"/>
<dbReference type="EMBL" id="BA000002">
    <property type="protein sequence ID" value="BAA80751.1"/>
    <property type="molecule type" value="Genomic_DNA"/>
</dbReference>
<dbReference type="PIR" id="B72558">
    <property type="entry name" value="B72558"/>
</dbReference>
<dbReference type="RefSeq" id="WP_010866571.1">
    <property type="nucleotide sequence ID" value="NC_000854.2"/>
</dbReference>
<dbReference type="SMR" id="Q9YB47"/>
<dbReference type="STRING" id="272557.APE_1749a"/>
<dbReference type="EnsemblBacteria" id="BAA80751">
    <property type="protein sequence ID" value="BAA80751"/>
    <property type="gene ID" value="APE_1749a"/>
</dbReference>
<dbReference type="GeneID" id="1446216"/>
<dbReference type="KEGG" id="ape:APE_1749a"/>
<dbReference type="PATRIC" id="fig|272557.25.peg.1176"/>
<dbReference type="eggNOG" id="arCOG04244">
    <property type="taxonomic scope" value="Archaea"/>
</dbReference>
<dbReference type="Proteomes" id="UP000002518">
    <property type="component" value="Chromosome"/>
</dbReference>
<dbReference type="GO" id="GO:0005737">
    <property type="term" value="C:cytoplasm"/>
    <property type="evidence" value="ECO:0007669"/>
    <property type="project" value="UniProtKB-SubCell"/>
</dbReference>
<dbReference type="GO" id="GO:0000428">
    <property type="term" value="C:DNA-directed RNA polymerase complex"/>
    <property type="evidence" value="ECO:0007669"/>
    <property type="project" value="UniProtKB-KW"/>
</dbReference>
<dbReference type="GO" id="GO:0003677">
    <property type="term" value="F:DNA binding"/>
    <property type="evidence" value="ECO:0007669"/>
    <property type="project" value="InterPro"/>
</dbReference>
<dbReference type="GO" id="GO:0003899">
    <property type="term" value="F:DNA-directed RNA polymerase activity"/>
    <property type="evidence" value="ECO:0007669"/>
    <property type="project" value="UniProtKB-UniRule"/>
</dbReference>
<dbReference type="GO" id="GO:0008270">
    <property type="term" value="F:zinc ion binding"/>
    <property type="evidence" value="ECO:0007669"/>
    <property type="project" value="UniProtKB-UniRule"/>
</dbReference>
<dbReference type="GO" id="GO:0006351">
    <property type="term" value="P:DNA-templated transcription"/>
    <property type="evidence" value="ECO:0007669"/>
    <property type="project" value="UniProtKB-UniRule"/>
</dbReference>
<dbReference type="Gene3D" id="1.10.10.60">
    <property type="entry name" value="Homeodomain-like"/>
    <property type="match status" value="1"/>
</dbReference>
<dbReference type="HAMAP" id="MF_00250">
    <property type="entry name" value="RNApol_arch_Rpo10"/>
    <property type="match status" value="1"/>
</dbReference>
<dbReference type="InterPro" id="IPR023580">
    <property type="entry name" value="RNA_pol_su_RPB10"/>
</dbReference>
<dbReference type="InterPro" id="IPR020789">
    <property type="entry name" value="RNA_pol_suN_Zn-BS"/>
</dbReference>
<dbReference type="InterPro" id="IPR000268">
    <property type="entry name" value="RPABC5/Rpb10"/>
</dbReference>
<dbReference type="NCBIfam" id="NF003089">
    <property type="entry name" value="PRK04016.1"/>
    <property type="match status" value="1"/>
</dbReference>
<dbReference type="PANTHER" id="PTHR23431:SF3">
    <property type="entry name" value="DNA-DIRECTED RNA POLYMERASES I, II, AND III SUBUNIT RPABC5"/>
    <property type="match status" value="1"/>
</dbReference>
<dbReference type="PANTHER" id="PTHR23431">
    <property type="entry name" value="DNA-DIRECTED RNA POLYMERASES I, II, AND III SUBUNIT RPABC5 FAMILY MEMBER"/>
    <property type="match status" value="1"/>
</dbReference>
<dbReference type="Pfam" id="PF01194">
    <property type="entry name" value="RNA_pol_N"/>
    <property type="match status" value="1"/>
</dbReference>
<dbReference type="PIRSF" id="PIRSF005653">
    <property type="entry name" value="RNA_pol_N/8_sub"/>
    <property type="match status" value="1"/>
</dbReference>
<dbReference type="SUPFAM" id="SSF46924">
    <property type="entry name" value="RNA polymerase subunit RPB10"/>
    <property type="match status" value="1"/>
</dbReference>
<dbReference type="PROSITE" id="PS01112">
    <property type="entry name" value="RNA_POL_N_8KD"/>
    <property type="match status" value="1"/>
</dbReference>
<name>RPO10_AERPE</name>